<organism>
    <name type="scientific">Pseudomonas syringae pv. syringae (strain B728a)</name>
    <dbReference type="NCBI Taxonomy" id="205918"/>
    <lineage>
        <taxon>Bacteria</taxon>
        <taxon>Pseudomonadati</taxon>
        <taxon>Pseudomonadota</taxon>
        <taxon>Gammaproteobacteria</taxon>
        <taxon>Pseudomonadales</taxon>
        <taxon>Pseudomonadaceae</taxon>
        <taxon>Pseudomonas</taxon>
        <taxon>Pseudomonas syringae</taxon>
    </lineage>
</organism>
<accession>Q4ZY26</accession>
<gene>
    <name evidence="1" type="primary">aroA</name>
    <name type="ordered locus">Psyr_0888</name>
</gene>
<reference key="1">
    <citation type="journal article" date="2005" name="Proc. Natl. Acad. Sci. U.S.A.">
        <title>Comparison of the complete genome sequences of Pseudomonas syringae pv. syringae B728a and pv. tomato DC3000.</title>
        <authorList>
            <person name="Feil H."/>
            <person name="Feil W.S."/>
            <person name="Chain P."/>
            <person name="Larimer F."/>
            <person name="Dibartolo G."/>
            <person name="Copeland A."/>
            <person name="Lykidis A."/>
            <person name="Trong S."/>
            <person name="Nolan M."/>
            <person name="Goltsman E."/>
            <person name="Thiel J."/>
            <person name="Malfatti S."/>
            <person name="Loper J.E."/>
            <person name="Lapidus A."/>
            <person name="Detter J.C."/>
            <person name="Land M."/>
            <person name="Richardson P.M."/>
            <person name="Kyrpides N.C."/>
            <person name="Ivanova N."/>
            <person name="Lindow S.E."/>
        </authorList>
    </citation>
    <scope>NUCLEOTIDE SEQUENCE [LARGE SCALE GENOMIC DNA]</scope>
    <source>
        <strain>B728a</strain>
    </source>
</reference>
<sequence>MRPQATLTVLPVERPLVGRVSPPGSKSITNRALLLAGLAKGTSRLTGALKSDDTRVMSEALRLMGVQVDEPDDSTFVVTSSGHWQAPQQALFLGNAGTATRFLTAALANFEGDFVVDGDEYMRKRPIGPLVDALQRMGVEVSAPSGCPPVAIKGKGGLEAGRIEIDGNLSSQYVSALLMAGACGKGPVEVALTGSEIGARGYLDLTLAAMRAFGAEVQAIGDAAWKVSATGYRATDFHIEPDASAATYLWAAQALTEGAIDLGVASNAFTQPDALASQIIASFPNMPAVIDGSQMQDAIPTLAVLAAFNRQPVRFVGIANLRVKECDRISALSNGLCAIAPGLAVEEGDDLIVTANPTLAGTTVDALIDTHSDHRIAMCFALAGLKIAGIRILDPDCVAKTYPGYWDALASLGVSVQR</sequence>
<keyword id="KW-0028">Amino-acid biosynthesis</keyword>
<keyword id="KW-0057">Aromatic amino acid biosynthesis</keyword>
<keyword id="KW-0963">Cytoplasm</keyword>
<keyword id="KW-0808">Transferase</keyword>
<dbReference type="EC" id="2.5.1.19" evidence="1"/>
<dbReference type="EMBL" id="CP000075">
    <property type="protein sequence ID" value="AAY35946.1"/>
    <property type="molecule type" value="Genomic_DNA"/>
</dbReference>
<dbReference type="RefSeq" id="WP_011266693.1">
    <property type="nucleotide sequence ID" value="NC_007005.1"/>
</dbReference>
<dbReference type="RefSeq" id="YP_233984.1">
    <property type="nucleotide sequence ID" value="NC_007005.1"/>
</dbReference>
<dbReference type="SMR" id="Q4ZY26"/>
<dbReference type="STRING" id="205918.Psyr_0888"/>
<dbReference type="KEGG" id="psb:Psyr_0888"/>
<dbReference type="PATRIC" id="fig|205918.7.peg.916"/>
<dbReference type="eggNOG" id="COG0128">
    <property type="taxonomic scope" value="Bacteria"/>
</dbReference>
<dbReference type="HOGENOM" id="CLU_024321_0_0_6"/>
<dbReference type="OrthoDB" id="9809920at2"/>
<dbReference type="UniPathway" id="UPA00053">
    <property type="reaction ID" value="UER00089"/>
</dbReference>
<dbReference type="Proteomes" id="UP000000426">
    <property type="component" value="Chromosome"/>
</dbReference>
<dbReference type="GO" id="GO:0005737">
    <property type="term" value="C:cytoplasm"/>
    <property type="evidence" value="ECO:0007669"/>
    <property type="project" value="UniProtKB-SubCell"/>
</dbReference>
<dbReference type="GO" id="GO:0003866">
    <property type="term" value="F:3-phosphoshikimate 1-carboxyvinyltransferase activity"/>
    <property type="evidence" value="ECO:0007669"/>
    <property type="project" value="UniProtKB-UniRule"/>
</dbReference>
<dbReference type="GO" id="GO:0008652">
    <property type="term" value="P:amino acid biosynthetic process"/>
    <property type="evidence" value="ECO:0007669"/>
    <property type="project" value="UniProtKB-KW"/>
</dbReference>
<dbReference type="GO" id="GO:0009073">
    <property type="term" value="P:aromatic amino acid family biosynthetic process"/>
    <property type="evidence" value="ECO:0007669"/>
    <property type="project" value="UniProtKB-KW"/>
</dbReference>
<dbReference type="GO" id="GO:0009423">
    <property type="term" value="P:chorismate biosynthetic process"/>
    <property type="evidence" value="ECO:0007669"/>
    <property type="project" value="UniProtKB-UniRule"/>
</dbReference>
<dbReference type="CDD" id="cd01556">
    <property type="entry name" value="EPSP_synthase"/>
    <property type="match status" value="1"/>
</dbReference>
<dbReference type="Gene3D" id="3.65.10.10">
    <property type="entry name" value="Enolpyruvate transferase domain"/>
    <property type="match status" value="3"/>
</dbReference>
<dbReference type="HAMAP" id="MF_00210">
    <property type="entry name" value="EPSP_synth"/>
    <property type="match status" value="1"/>
</dbReference>
<dbReference type="InterPro" id="IPR001986">
    <property type="entry name" value="Enolpyruvate_Tfrase_dom"/>
</dbReference>
<dbReference type="InterPro" id="IPR036968">
    <property type="entry name" value="Enolpyruvate_Tfrase_sf"/>
</dbReference>
<dbReference type="InterPro" id="IPR006264">
    <property type="entry name" value="EPSP_synthase"/>
</dbReference>
<dbReference type="InterPro" id="IPR023193">
    <property type="entry name" value="EPSP_synthase_CS"/>
</dbReference>
<dbReference type="InterPro" id="IPR013792">
    <property type="entry name" value="RNA3'P_cycl/enolpyr_Trfase_a/b"/>
</dbReference>
<dbReference type="NCBIfam" id="TIGR01356">
    <property type="entry name" value="aroA"/>
    <property type="match status" value="1"/>
</dbReference>
<dbReference type="PANTHER" id="PTHR21090">
    <property type="entry name" value="AROM/DEHYDROQUINATE SYNTHASE"/>
    <property type="match status" value="1"/>
</dbReference>
<dbReference type="PANTHER" id="PTHR21090:SF5">
    <property type="entry name" value="PENTAFUNCTIONAL AROM POLYPEPTIDE"/>
    <property type="match status" value="1"/>
</dbReference>
<dbReference type="Pfam" id="PF00275">
    <property type="entry name" value="EPSP_synthase"/>
    <property type="match status" value="1"/>
</dbReference>
<dbReference type="PIRSF" id="PIRSF000505">
    <property type="entry name" value="EPSPS"/>
    <property type="match status" value="1"/>
</dbReference>
<dbReference type="SUPFAM" id="SSF55205">
    <property type="entry name" value="EPT/RTPC-like"/>
    <property type="match status" value="1"/>
</dbReference>
<dbReference type="PROSITE" id="PS00104">
    <property type="entry name" value="EPSP_SYNTHASE_1"/>
    <property type="match status" value="1"/>
</dbReference>
<comment type="function">
    <text evidence="1">Catalyzes the transfer of the enolpyruvyl moiety of phosphoenolpyruvate (PEP) to the 5-hydroxyl of shikimate-3-phosphate (S3P) to produce enolpyruvyl shikimate-3-phosphate and inorganic phosphate.</text>
</comment>
<comment type="catalytic activity">
    <reaction evidence="1">
        <text>3-phosphoshikimate + phosphoenolpyruvate = 5-O-(1-carboxyvinyl)-3-phosphoshikimate + phosphate</text>
        <dbReference type="Rhea" id="RHEA:21256"/>
        <dbReference type="ChEBI" id="CHEBI:43474"/>
        <dbReference type="ChEBI" id="CHEBI:57701"/>
        <dbReference type="ChEBI" id="CHEBI:58702"/>
        <dbReference type="ChEBI" id="CHEBI:145989"/>
        <dbReference type="EC" id="2.5.1.19"/>
    </reaction>
    <physiologicalReaction direction="left-to-right" evidence="1">
        <dbReference type="Rhea" id="RHEA:21257"/>
    </physiologicalReaction>
</comment>
<comment type="pathway">
    <text evidence="1">Metabolic intermediate biosynthesis; chorismate biosynthesis; chorismate from D-erythrose 4-phosphate and phosphoenolpyruvate: step 6/7.</text>
</comment>
<comment type="subunit">
    <text evidence="1">Monomer.</text>
</comment>
<comment type="subcellular location">
    <subcellularLocation>
        <location evidence="1">Cytoplasm</location>
    </subcellularLocation>
</comment>
<comment type="similarity">
    <text evidence="1">Belongs to the EPSP synthase family.</text>
</comment>
<feature type="chain" id="PRO_1000124698" description="3-phosphoshikimate 1-carboxyvinyltransferase">
    <location>
        <begin position="1"/>
        <end position="418"/>
    </location>
</feature>
<feature type="active site" description="Proton acceptor" evidence="1">
    <location>
        <position position="297"/>
    </location>
</feature>
<feature type="binding site" evidence="1">
    <location>
        <position position="26"/>
    </location>
    <ligand>
        <name>3-phosphoshikimate</name>
        <dbReference type="ChEBI" id="CHEBI:145989"/>
    </ligand>
</feature>
<feature type="binding site" evidence="1">
    <location>
        <position position="26"/>
    </location>
    <ligand>
        <name>phosphoenolpyruvate</name>
        <dbReference type="ChEBI" id="CHEBI:58702"/>
    </ligand>
</feature>
<feature type="binding site" evidence="1">
    <location>
        <position position="27"/>
    </location>
    <ligand>
        <name>3-phosphoshikimate</name>
        <dbReference type="ChEBI" id="CHEBI:145989"/>
    </ligand>
</feature>
<feature type="binding site" evidence="1">
    <location>
        <position position="31"/>
    </location>
    <ligand>
        <name>3-phosphoshikimate</name>
        <dbReference type="ChEBI" id="CHEBI:145989"/>
    </ligand>
</feature>
<feature type="binding site" evidence="1">
    <location>
        <position position="97"/>
    </location>
    <ligand>
        <name>phosphoenolpyruvate</name>
        <dbReference type="ChEBI" id="CHEBI:58702"/>
    </ligand>
</feature>
<feature type="binding site" evidence="1">
    <location>
        <position position="125"/>
    </location>
    <ligand>
        <name>phosphoenolpyruvate</name>
        <dbReference type="ChEBI" id="CHEBI:58702"/>
    </ligand>
</feature>
<feature type="binding site" evidence="1">
    <location>
        <position position="170"/>
    </location>
    <ligand>
        <name>3-phosphoshikimate</name>
        <dbReference type="ChEBI" id="CHEBI:145989"/>
    </ligand>
</feature>
<feature type="binding site" evidence="1">
    <location>
        <position position="171"/>
    </location>
    <ligand>
        <name>3-phosphoshikimate</name>
        <dbReference type="ChEBI" id="CHEBI:145989"/>
    </ligand>
</feature>
<feature type="binding site" evidence="1">
    <location>
        <position position="172"/>
    </location>
    <ligand>
        <name>3-phosphoshikimate</name>
        <dbReference type="ChEBI" id="CHEBI:145989"/>
    </ligand>
</feature>
<feature type="binding site" evidence="1">
    <location>
        <position position="172"/>
    </location>
    <ligand>
        <name>phosphoenolpyruvate</name>
        <dbReference type="ChEBI" id="CHEBI:58702"/>
    </ligand>
</feature>
<feature type="binding site" evidence="1">
    <location>
        <position position="297"/>
    </location>
    <ligand>
        <name>3-phosphoshikimate</name>
        <dbReference type="ChEBI" id="CHEBI:145989"/>
    </ligand>
</feature>
<feature type="binding site" evidence="1">
    <location>
        <position position="320"/>
    </location>
    <ligand>
        <name>3-phosphoshikimate</name>
        <dbReference type="ChEBI" id="CHEBI:145989"/>
    </ligand>
</feature>
<feature type="binding site" evidence="1">
    <location>
        <position position="324"/>
    </location>
    <ligand>
        <name>3-phosphoshikimate</name>
        <dbReference type="ChEBI" id="CHEBI:145989"/>
    </ligand>
</feature>
<feature type="binding site" evidence="1">
    <location>
        <position position="328"/>
    </location>
    <ligand>
        <name>phosphoenolpyruvate</name>
        <dbReference type="ChEBI" id="CHEBI:58702"/>
    </ligand>
</feature>
<feature type="binding site" evidence="1">
    <location>
        <position position="375"/>
    </location>
    <ligand>
        <name>phosphoenolpyruvate</name>
        <dbReference type="ChEBI" id="CHEBI:58702"/>
    </ligand>
</feature>
<feature type="binding site" evidence="1">
    <location>
        <position position="400"/>
    </location>
    <ligand>
        <name>phosphoenolpyruvate</name>
        <dbReference type="ChEBI" id="CHEBI:58702"/>
    </ligand>
</feature>
<name>AROA_PSEU2</name>
<evidence type="ECO:0000255" key="1">
    <source>
        <dbReference type="HAMAP-Rule" id="MF_00210"/>
    </source>
</evidence>
<protein>
    <recommendedName>
        <fullName evidence="1">3-phosphoshikimate 1-carboxyvinyltransferase</fullName>
        <ecNumber evidence="1">2.5.1.19</ecNumber>
    </recommendedName>
    <alternativeName>
        <fullName evidence="1">5-enolpyruvylshikimate-3-phosphate synthase</fullName>
        <shortName evidence="1">EPSP synthase</shortName>
        <shortName evidence="1">EPSPS</shortName>
    </alternativeName>
</protein>
<proteinExistence type="inferred from homology"/>